<proteinExistence type="inferred from homology"/>
<sequence length="176" mass="20196">MLIPPINLHAWIEEHRHLLKPPVGNKCIQQDGFIIMIVGGPNARTDYHYDEGPEWFFQLEGEMVLKVQDDGVARDIPIRAGEIFLLPPRVPHSPQRAAGSIGIVIERVRLPHEQDGLQWYCPQCNHKLYEAMFPLKNIETDFPPVFDHFYRSLALRTCSQCGHLHPAPERYAAVED</sequence>
<dbReference type="EC" id="1.13.11.6" evidence="1"/>
<dbReference type="EMBL" id="AP008229">
    <property type="protein sequence ID" value="BAE69057.1"/>
    <property type="status" value="ALT_INIT"/>
    <property type="molecule type" value="Genomic_DNA"/>
</dbReference>
<dbReference type="RefSeq" id="WP_024744799.1">
    <property type="nucleotide sequence ID" value="NC_007705.1"/>
</dbReference>
<dbReference type="SMR" id="Q2P320"/>
<dbReference type="KEGG" id="xom:XOO2302"/>
<dbReference type="HOGENOM" id="CLU_095765_0_0_6"/>
<dbReference type="UniPathway" id="UPA00253">
    <property type="reaction ID" value="UER00330"/>
</dbReference>
<dbReference type="GO" id="GO:0000334">
    <property type="term" value="F:3-hydroxyanthranilate 3,4-dioxygenase activity"/>
    <property type="evidence" value="ECO:0007669"/>
    <property type="project" value="UniProtKB-UniRule"/>
</dbReference>
<dbReference type="GO" id="GO:0008198">
    <property type="term" value="F:ferrous iron binding"/>
    <property type="evidence" value="ECO:0007669"/>
    <property type="project" value="UniProtKB-UniRule"/>
</dbReference>
<dbReference type="GO" id="GO:0043420">
    <property type="term" value="P:anthranilate metabolic process"/>
    <property type="evidence" value="ECO:0007669"/>
    <property type="project" value="UniProtKB-UniRule"/>
</dbReference>
<dbReference type="GO" id="GO:0006569">
    <property type="term" value="P:L-tryptophan catabolic process"/>
    <property type="evidence" value="ECO:0007669"/>
    <property type="project" value="UniProtKB-UniRule"/>
</dbReference>
<dbReference type="GO" id="GO:0009435">
    <property type="term" value="P:NAD biosynthetic process"/>
    <property type="evidence" value="ECO:0007669"/>
    <property type="project" value="UniProtKB-UniPathway"/>
</dbReference>
<dbReference type="GO" id="GO:0019805">
    <property type="term" value="P:quinolinate biosynthetic process"/>
    <property type="evidence" value="ECO:0007669"/>
    <property type="project" value="UniProtKB-UniRule"/>
</dbReference>
<dbReference type="CDD" id="cd06123">
    <property type="entry name" value="cupin_HAO"/>
    <property type="match status" value="1"/>
</dbReference>
<dbReference type="Gene3D" id="2.60.120.10">
    <property type="entry name" value="Jelly Rolls"/>
    <property type="match status" value="1"/>
</dbReference>
<dbReference type="HAMAP" id="MF_00825">
    <property type="entry name" value="3_HAO"/>
    <property type="match status" value="1"/>
</dbReference>
<dbReference type="InterPro" id="IPR010329">
    <property type="entry name" value="3hydroanth_dOase"/>
</dbReference>
<dbReference type="InterPro" id="IPR014710">
    <property type="entry name" value="RmlC-like_jellyroll"/>
</dbReference>
<dbReference type="InterPro" id="IPR011051">
    <property type="entry name" value="RmlC_Cupin_sf"/>
</dbReference>
<dbReference type="NCBIfam" id="TIGR03037">
    <property type="entry name" value="anthran_nbaC"/>
    <property type="match status" value="1"/>
</dbReference>
<dbReference type="NCBIfam" id="NF009763">
    <property type="entry name" value="PRK13264.1"/>
    <property type="match status" value="1"/>
</dbReference>
<dbReference type="PANTHER" id="PTHR15497">
    <property type="entry name" value="3-HYDROXYANTHRANILATE 3,4-DIOXYGENASE"/>
    <property type="match status" value="1"/>
</dbReference>
<dbReference type="PANTHER" id="PTHR15497:SF1">
    <property type="entry name" value="3-HYDROXYANTHRANILATE 3,4-DIOXYGENASE"/>
    <property type="match status" value="1"/>
</dbReference>
<dbReference type="Pfam" id="PF06052">
    <property type="entry name" value="3-HAO"/>
    <property type="match status" value="1"/>
</dbReference>
<dbReference type="SUPFAM" id="SSF51182">
    <property type="entry name" value="RmlC-like cupins"/>
    <property type="match status" value="1"/>
</dbReference>
<protein>
    <recommendedName>
        <fullName evidence="1">3-hydroxyanthranilate 3,4-dioxygenase</fullName>
        <ecNumber evidence="1">1.13.11.6</ecNumber>
    </recommendedName>
    <alternativeName>
        <fullName evidence="1">3-hydroxyanthranilate oxygenase</fullName>
        <shortName evidence="1">3-HAO</shortName>
    </alternativeName>
    <alternativeName>
        <fullName evidence="1">3-hydroxyanthranilic acid dioxygenase</fullName>
        <shortName evidence="1">HAD</shortName>
    </alternativeName>
</protein>
<comment type="function">
    <text evidence="1">Catalyzes the oxidative ring opening of 3-hydroxyanthranilate to 2-amino-3-carboxymuconate semialdehyde, which spontaneously cyclizes to quinolinate.</text>
</comment>
<comment type="catalytic activity">
    <reaction evidence="1">
        <text>3-hydroxyanthranilate + O2 = (2Z,4Z)-2-amino-3-carboxymuconate 6-semialdehyde</text>
        <dbReference type="Rhea" id="RHEA:17953"/>
        <dbReference type="ChEBI" id="CHEBI:15379"/>
        <dbReference type="ChEBI" id="CHEBI:36559"/>
        <dbReference type="ChEBI" id="CHEBI:77612"/>
        <dbReference type="EC" id="1.13.11.6"/>
    </reaction>
</comment>
<comment type="cofactor">
    <cofactor evidence="1">
        <name>Fe(2+)</name>
        <dbReference type="ChEBI" id="CHEBI:29033"/>
    </cofactor>
    <text evidence="1">Binds 2 Fe(2+) ions per subunit.</text>
</comment>
<comment type="pathway">
    <text evidence="1">Cofactor biosynthesis; NAD(+) biosynthesis; quinolinate from L-kynurenine: step 3/3.</text>
</comment>
<comment type="subunit">
    <text evidence="1">Homodimer.</text>
</comment>
<comment type="similarity">
    <text evidence="1">Belongs to the 3-HAO family.</text>
</comment>
<comment type="sequence caution" evidence="2">
    <conflict type="erroneous initiation">
        <sequence resource="EMBL-CDS" id="BAE69057"/>
    </conflict>
</comment>
<evidence type="ECO:0000255" key="1">
    <source>
        <dbReference type="HAMAP-Rule" id="MF_00825"/>
    </source>
</evidence>
<evidence type="ECO:0000305" key="2"/>
<organism>
    <name type="scientific">Xanthomonas oryzae pv. oryzae (strain MAFF 311018)</name>
    <dbReference type="NCBI Taxonomy" id="342109"/>
    <lineage>
        <taxon>Bacteria</taxon>
        <taxon>Pseudomonadati</taxon>
        <taxon>Pseudomonadota</taxon>
        <taxon>Gammaproteobacteria</taxon>
        <taxon>Lysobacterales</taxon>
        <taxon>Lysobacteraceae</taxon>
        <taxon>Xanthomonas</taxon>
    </lineage>
</organism>
<feature type="chain" id="PRO_0000245483" description="3-hydroxyanthranilate 3,4-dioxygenase">
    <location>
        <begin position="1"/>
        <end position="176"/>
    </location>
</feature>
<feature type="binding site" evidence="1">
    <location>
        <position position="44"/>
    </location>
    <ligand>
        <name>O2</name>
        <dbReference type="ChEBI" id="CHEBI:15379"/>
    </ligand>
</feature>
<feature type="binding site" evidence="1">
    <location>
        <position position="48"/>
    </location>
    <ligand>
        <name>Fe cation</name>
        <dbReference type="ChEBI" id="CHEBI:24875"/>
        <label>1</label>
        <note>catalytic</note>
    </ligand>
</feature>
<feature type="binding site" evidence="1">
    <location>
        <position position="54"/>
    </location>
    <ligand>
        <name>Fe cation</name>
        <dbReference type="ChEBI" id="CHEBI:24875"/>
        <label>1</label>
        <note>catalytic</note>
    </ligand>
</feature>
<feature type="binding site" evidence="1">
    <location>
        <position position="54"/>
    </location>
    <ligand>
        <name>substrate</name>
    </ligand>
</feature>
<feature type="binding site" evidence="1">
    <location>
        <position position="92"/>
    </location>
    <ligand>
        <name>Fe cation</name>
        <dbReference type="ChEBI" id="CHEBI:24875"/>
        <label>1</label>
        <note>catalytic</note>
    </ligand>
</feature>
<feature type="binding site" evidence="1">
    <location>
        <position position="96"/>
    </location>
    <ligand>
        <name>substrate</name>
    </ligand>
</feature>
<feature type="binding site" evidence="1">
    <location>
        <position position="106"/>
    </location>
    <ligand>
        <name>substrate</name>
    </ligand>
</feature>
<feature type="binding site" evidence="1">
    <location>
        <position position="121"/>
    </location>
    <ligand>
        <name>Fe cation</name>
        <dbReference type="ChEBI" id="CHEBI:24875"/>
        <label>2</label>
    </ligand>
</feature>
<feature type="binding site" evidence="1">
    <location>
        <position position="124"/>
    </location>
    <ligand>
        <name>Fe cation</name>
        <dbReference type="ChEBI" id="CHEBI:24875"/>
        <label>2</label>
    </ligand>
</feature>
<feature type="binding site" evidence="1">
    <location>
        <position position="158"/>
    </location>
    <ligand>
        <name>Fe cation</name>
        <dbReference type="ChEBI" id="CHEBI:24875"/>
        <label>2</label>
    </ligand>
</feature>
<feature type="binding site" evidence="1">
    <location>
        <position position="161"/>
    </location>
    <ligand>
        <name>Fe cation</name>
        <dbReference type="ChEBI" id="CHEBI:24875"/>
        <label>2</label>
    </ligand>
</feature>
<keyword id="KW-0223">Dioxygenase</keyword>
<keyword id="KW-0408">Iron</keyword>
<keyword id="KW-0479">Metal-binding</keyword>
<keyword id="KW-0560">Oxidoreductase</keyword>
<keyword id="KW-0662">Pyridine nucleotide biosynthesis</keyword>
<gene>
    <name evidence="1" type="primary">nbaC</name>
    <name type="ordered locus">XOO2302</name>
</gene>
<reference key="1">
    <citation type="journal article" date="2005" name="Jpn. Agric. Res. Q.">
        <title>Genome sequence of Xanthomonas oryzae pv. oryzae suggests contribution of large numbers of effector genes and insertion sequences to its race diversity.</title>
        <authorList>
            <person name="Ochiai H."/>
            <person name="Inoue Y."/>
            <person name="Takeya M."/>
            <person name="Sasaki A."/>
            <person name="Kaku H."/>
        </authorList>
    </citation>
    <scope>NUCLEOTIDE SEQUENCE [LARGE SCALE GENOMIC DNA]</scope>
    <source>
        <strain>MAFF 311018</strain>
    </source>
</reference>
<name>3HAO_XANOM</name>
<accession>Q2P320</accession>